<accession>A5D5G2</accession>
<reference key="1">
    <citation type="journal article" date="2008" name="Genome Res.">
        <title>The genome of Pelotomaculum thermopropionicum reveals niche-associated evolution in anaerobic microbiota.</title>
        <authorList>
            <person name="Kosaka T."/>
            <person name="Kato S."/>
            <person name="Shimoyama T."/>
            <person name="Ishii S."/>
            <person name="Abe T."/>
            <person name="Watanabe K."/>
        </authorList>
    </citation>
    <scope>NUCLEOTIDE SEQUENCE [LARGE SCALE GENOMIC DNA]</scope>
    <source>
        <strain>DSM 13744 / JCM 10971 / SI</strain>
    </source>
</reference>
<protein>
    <recommendedName>
        <fullName evidence="1">Large ribosomal subunit protein uL16</fullName>
    </recommendedName>
    <alternativeName>
        <fullName evidence="3">50S ribosomal protein L16</fullName>
    </alternativeName>
</protein>
<gene>
    <name evidence="1" type="primary">rplP</name>
    <name type="ordered locus">PTH_0327</name>
</gene>
<sequence length="144" mass="16108">MLIPKRVKYRKQHRGRPGGGMAKGGKEINFGEYGLMALEPAWITNRQIEAARIAMTRHIKRGGKVWIRIFPDKPITAKPAETRMGSGKGTPEYWVAVVKPGRIMFELAGVTEEVAREAMRLASHKLPIKTKFVKRGEVGEVNEG</sequence>
<proteinExistence type="inferred from homology"/>
<organism>
    <name type="scientific">Pelotomaculum thermopropionicum (strain DSM 13744 / JCM 10971 / SI)</name>
    <dbReference type="NCBI Taxonomy" id="370438"/>
    <lineage>
        <taxon>Bacteria</taxon>
        <taxon>Bacillati</taxon>
        <taxon>Bacillota</taxon>
        <taxon>Clostridia</taxon>
        <taxon>Eubacteriales</taxon>
        <taxon>Desulfotomaculaceae</taxon>
        <taxon>Pelotomaculum</taxon>
    </lineage>
</organism>
<comment type="function">
    <text evidence="1">Binds 23S rRNA and is also seen to make contacts with the A and possibly P site tRNAs.</text>
</comment>
<comment type="subunit">
    <text evidence="1">Part of the 50S ribosomal subunit.</text>
</comment>
<comment type="similarity">
    <text evidence="1">Belongs to the universal ribosomal protein uL16 family.</text>
</comment>
<keyword id="KW-1185">Reference proteome</keyword>
<keyword id="KW-0687">Ribonucleoprotein</keyword>
<keyword id="KW-0689">Ribosomal protein</keyword>
<keyword id="KW-0694">RNA-binding</keyword>
<keyword id="KW-0699">rRNA-binding</keyword>
<keyword id="KW-0820">tRNA-binding</keyword>
<feature type="chain" id="PRO_1000086766" description="Large ribosomal subunit protein uL16">
    <location>
        <begin position="1"/>
        <end position="144"/>
    </location>
</feature>
<feature type="region of interest" description="Disordered" evidence="2">
    <location>
        <begin position="1"/>
        <end position="23"/>
    </location>
</feature>
<feature type="compositionally biased region" description="Basic residues" evidence="2">
    <location>
        <begin position="1"/>
        <end position="16"/>
    </location>
</feature>
<evidence type="ECO:0000255" key="1">
    <source>
        <dbReference type="HAMAP-Rule" id="MF_01342"/>
    </source>
</evidence>
<evidence type="ECO:0000256" key="2">
    <source>
        <dbReference type="SAM" id="MobiDB-lite"/>
    </source>
</evidence>
<evidence type="ECO:0000305" key="3"/>
<dbReference type="EMBL" id="AP009389">
    <property type="protein sequence ID" value="BAF58508.1"/>
    <property type="molecule type" value="Genomic_DNA"/>
</dbReference>
<dbReference type="SMR" id="A5D5G2"/>
<dbReference type="STRING" id="370438.PTH_0327"/>
<dbReference type="KEGG" id="pth:PTH_0327"/>
<dbReference type="eggNOG" id="COG0197">
    <property type="taxonomic scope" value="Bacteria"/>
</dbReference>
<dbReference type="HOGENOM" id="CLU_078858_2_1_9"/>
<dbReference type="Proteomes" id="UP000006556">
    <property type="component" value="Chromosome"/>
</dbReference>
<dbReference type="GO" id="GO:0022625">
    <property type="term" value="C:cytosolic large ribosomal subunit"/>
    <property type="evidence" value="ECO:0007669"/>
    <property type="project" value="TreeGrafter"/>
</dbReference>
<dbReference type="GO" id="GO:0019843">
    <property type="term" value="F:rRNA binding"/>
    <property type="evidence" value="ECO:0007669"/>
    <property type="project" value="UniProtKB-UniRule"/>
</dbReference>
<dbReference type="GO" id="GO:0003735">
    <property type="term" value="F:structural constituent of ribosome"/>
    <property type="evidence" value="ECO:0007669"/>
    <property type="project" value="InterPro"/>
</dbReference>
<dbReference type="GO" id="GO:0000049">
    <property type="term" value="F:tRNA binding"/>
    <property type="evidence" value="ECO:0007669"/>
    <property type="project" value="UniProtKB-KW"/>
</dbReference>
<dbReference type="GO" id="GO:0006412">
    <property type="term" value="P:translation"/>
    <property type="evidence" value="ECO:0007669"/>
    <property type="project" value="UniProtKB-UniRule"/>
</dbReference>
<dbReference type="CDD" id="cd01433">
    <property type="entry name" value="Ribosomal_L16_L10e"/>
    <property type="match status" value="1"/>
</dbReference>
<dbReference type="FunFam" id="3.90.1170.10:FF:000001">
    <property type="entry name" value="50S ribosomal protein L16"/>
    <property type="match status" value="1"/>
</dbReference>
<dbReference type="Gene3D" id="3.90.1170.10">
    <property type="entry name" value="Ribosomal protein L10e/L16"/>
    <property type="match status" value="1"/>
</dbReference>
<dbReference type="HAMAP" id="MF_01342">
    <property type="entry name" value="Ribosomal_uL16"/>
    <property type="match status" value="1"/>
</dbReference>
<dbReference type="InterPro" id="IPR047873">
    <property type="entry name" value="Ribosomal_uL16"/>
</dbReference>
<dbReference type="InterPro" id="IPR000114">
    <property type="entry name" value="Ribosomal_uL16_bact-type"/>
</dbReference>
<dbReference type="InterPro" id="IPR020798">
    <property type="entry name" value="Ribosomal_uL16_CS"/>
</dbReference>
<dbReference type="InterPro" id="IPR016180">
    <property type="entry name" value="Ribosomal_uL16_dom"/>
</dbReference>
<dbReference type="InterPro" id="IPR036920">
    <property type="entry name" value="Ribosomal_uL16_sf"/>
</dbReference>
<dbReference type="NCBIfam" id="TIGR01164">
    <property type="entry name" value="rplP_bact"/>
    <property type="match status" value="1"/>
</dbReference>
<dbReference type="PANTHER" id="PTHR12220">
    <property type="entry name" value="50S/60S RIBOSOMAL PROTEIN L16"/>
    <property type="match status" value="1"/>
</dbReference>
<dbReference type="PANTHER" id="PTHR12220:SF13">
    <property type="entry name" value="LARGE RIBOSOMAL SUBUNIT PROTEIN UL16M"/>
    <property type="match status" value="1"/>
</dbReference>
<dbReference type="Pfam" id="PF00252">
    <property type="entry name" value="Ribosomal_L16"/>
    <property type="match status" value="1"/>
</dbReference>
<dbReference type="PRINTS" id="PR00060">
    <property type="entry name" value="RIBOSOMALL16"/>
</dbReference>
<dbReference type="SUPFAM" id="SSF54686">
    <property type="entry name" value="Ribosomal protein L16p/L10e"/>
    <property type="match status" value="1"/>
</dbReference>
<dbReference type="PROSITE" id="PS00586">
    <property type="entry name" value="RIBOSOMAL_L16_1"/>
    <property type="match status" value="1"/>
</dbReference>
<dbReference type="PROSITE" id="PS00701">
    <property type="entry name" value="RIBOSOMAL_L16_2"/>
    <property type="match status" value="1"/>
</dbReference>
<name>RL16_PELTS</name>